<name>YD521_YEAST</name>
<comment type="subcellular location">
    <subcellularLocation>
        <location evidence="2">Membrane</location>
        <topology evidence="2">Multi-pass membrane protein</topology>
    </subcellularLocation>
</comment>
<comment type="miscellaneous">
    <text evidence="2">Partially overlaps YDR520C.</text>
</comment>
<comment type="caution">
    <text evidence="3">Product of a dubious gene prediction unlikely to encode a functional protein. Because of that it is not part of the S.cerevisiae S288c complete/reference proteome set.</text>
</comment>
<feature type="chain" id="PRO_0000299902" description="Putative uncharacterized protein YDR521W">
    <location>
        <begin position="1"/>
        <end position="111"/>
    </location>
</feature>
<feature type="transmembrane region" description="Helical" evidence="1">
    <location>
        <begin position="18"/>
        <end position="38"/>
    </location>
</feature>
<feature type="transmembrane region" description="Helical" evidence="1">
    <location>
        <begin position="42"/>
        <end position="62"/>
    </location>
</feature>
<dbReference type="EMBL" id="U33057">
    <property type="protein sequence ID" value="AAB64978.1"/>
    <property type="molecule type" value="Genomic_DNA"/>
</dbReference>
<dbReference type="PIR" id="S69593">
    <property type="entry name" value="S69593"/>
</dbReference>
<dbReference type="STRING" id="4932.YDR521W"/>
<dbReference type="PaxDb" id="4932-YDR521W"/>
<dbReference type="EnsemblFungi" id="YDR521W_mRNA">
    <property type="protein sequence ID" value="YDR521W"/>
    <property type="gene ID" value="YDR521W"/>
</dbReference>
<dbReference type="AGR" id="SGD:S000002929"/>
<dbReference type="SGD" id="S000002929">
    <property type="gene designation" value="YDR521W"/>
</dbReference>
<dbReference type="HOGENOM" id="CLU_2160371_0_0_1"/>
<dbReference type="GO" id="GO:0016020">
    <property type="term" value="C:membrane"/>
    <property type="evidence" value="ECO:0007669"/>
    <property type="project" value="UniProtKB-SubCell"/>
</dbReference>
<reference key="1">
    <citation type="journal article" date="1997" name="Nature">
        <title>The nucleotide sequence of Saccharomyces cerevisiae chromosome IV.</title>
        <authorList>
            <person name="Jacq C."/>
            <person name="Alt-Moerbe J."/>
            <person name="Andre B."/>
            <person name="Arnold W."/>
            <person name="Bahr A."/>
            <person name="Ballesta J.P.G."/>
            <person name="Bargues M."/>
            <person name="Baron L."/>
            <person name="Becker A."/>
            <person name="Biteau N."/>
            <person name="Bloecker H."/>
            <person name="Blugeon C."/>
            <person name="Boskovic J."/>
            <person name="Brandt P."/>
            <person name="Brueckner M."/>
            <person name="Buitrago M.J."/>
            <person name="Coster F."/>
            <person name="Delaveau T."/>
            <person name="del Rey F."/>
            <person name="Dujon B."/>
            <person name="Eide L.G."/>
            <person name="Garcia-Cantalejo J.M."/>
            <person name="Goffeau A."/>
            <person name="Gomez-Peris A."/>
            <person name="Granotier C."/>
            <person name="Hanemann V."/>
            <person name="Hankeln T."/>
            <person name="Hoheisel J.D."/>
            <person name="Jaeger W."/>
            <person name="Jimenez A."/>
            <person name="Jonniaux J.-L."/>
            <person name="Kraemer C."/>
            <person name="Kuester H."/>
            <person name="Laamanen P."/>
            <person name="Legros Y."/>
            <person name="Louis E.J."/>
            <person name="Moeller-Rieker S."/>
            <person name="Monnet A."/>
            <person name="Moro M."/>
            <person name="Mueller-Auer S."/>
            <person name="Nussbaumer B."/>
            <person name="Paricio N."/>
            <person name="Paulin L."/>
            <person name="Perea J."/>
            <person name="Perez-Alonso M."/>
            <person name="Perez-Ortin J.E."/>
            <person name="Pohl T.M."/>
            <person name="Prydz H."/>
            <person name="Purnelle B."/>
            <person name="Rasmussen S.W."/>
            <person name="Remacha M.A."/>
            <person name="Revuelta J.L."/>
            <person name="Rieger M."/>
            <person name="Salom D."/>
            <person name="Saluz H.P."/>
            <person name="Saiz J.E."/>
            <person name="Saren A.-M."/>
            <person name="Schaefer M."/>
            <person name="Scharfe M."/>
            <person name="Schmidt E.R."/>
            <person name="Schneider C."/>
            <person name="Scholler P."/>
            <person name="Schwarz S."/>
            <person name="Soler-Mira A."/>
            <person name="Urrestarazu L.A."/>
            <person name="Verhasselt P."/>
            <person name="Vissers S."/>
            <person name="Voet M."/>
            <person name="Volckaert G."/>
            <person name="Wagner G."/>
            <person name="Wambutt R."/>
            <person name="Wedler E."/>
            <person name="Wedler H."/>
            <person name="Woelfl S."/>
            <person name="Harris D.E."/>
            <person name="Bowman S."/>
            <person name="Brown D."/>
            <person name="Churcher C.M."/>
            <person name="Connor R."/>
            <person name="Dedman K."/>
            <person name="Gentles S."/>
            <person name="Hamlin N."/>
            <person name="Hunt S."/>
            <person name="Jones L."/>
            <person name="McDonald S."/>
            <person name="Murphy L.D."/>
            <person name="Niblett D."/>
            <person name="Odell C."/>
            <person name="Oliver K."/>
            <person name="Rajandream M.A."/>
            <person name="Richards C."/>
            <person name="Shore L."/>
            <person name="Walsh S.V."/>
            <person name="Barrell B.G."/>
            <person name="Dietrich F.S."/>
            <person name="Mulligan J.T."/>
            <person name="Allen E."/>
            <person name="Araujo R."/>
            <person name="Aviles E."/>
            <person name="Berno A."/>
            <person name="Carpenter J."/>
            <person name="Chen E."/>
            <person name="Cherry J.M."/>
            <person name="Chung E."/>
            <person name="Duncan M."/>
            <person name="Hunicke-Smith S."/>
            <person name="Hyman R.W."/>
            <person name="Komp C."/>
            <person name="Lashkari D."/>
            <person name="Lew H."/>
            <person name="Lin D."/>
            <person name="Mosedale D."/>
            <person name="Nakahara K."/>
            <person name="Namath A."/>
            <person name="Oefner P."/>
            <person name="Oh C."/>
            <person name="Petel F.X."/>
            <person name="Roberts D."/>
            <person name="Schramm S."/>
            <person name="Schroeder M."/>
            <person name="Shogren T."/>
            <person name="Shroff N."/>
            <person name="Winant A."/>
            <person name="Yelton M.A."/>
            <person name="Botstein D."/>
            <person name="Davis R.W."/>
            <person name="Johnston M."/>
            <person name="Andrews S."/>
            <person name="Brinkman R."/>
            <person name="Cooper J."/>
            <person name="Ding H."/>
            <person name="Du Z."/>
            <person name="Favello A."/>
            <person name="Fulton L."/>
            <person name="Gattung S."/>
            <person name="Greco T."/>
            <person name="Hallsworth K."/>
            <person name="Hawkins J."/>
            <person name="Hillier L.W."/>
            <person name="Jier M."/>
            <person name="Johnson D."/>
            <person name="Johnston L."/>
            <person name="Kirsten J."/>
            <person name="Kucaba T."/>
            <person name="Langston Y."/>
            <person name="Latreille P."/>
            <person name="Le T."/>
            <person name="Mardis E."/>
            <person name="Menezes S."/>
            <person name="Miller N."/>
            <person name="Nhan M."/>
            <person name="Pauley A."/>
            <person name="Peluso D."/>
            <person name="Rifkin L."/>
            <person name="Riles L."/>
            <person name="Taich A."/>
            <person name="Trevaskis E."/>
            <person name="Vignati D."/>
            <person name="Wilcox L."/>
            <person name="Wohldman P."/>
            <person name="Vaudin M."/>
            <person name="Wilson R."/>
            <person name="Waterston R."/>
            <person name="Albermann K."/>
            <person name="Hani J."/>
            <person name="Heumann K."/>
            <person name="Kleine K."/>
            <person name="Mewes H.-W."/>
            <person name="Zollner A."/>
            <person name="Zaccaria P."/>
        </authorList>
    </citation>
    <scope>NUCLEOTIDE SEQUENCE [LARGE SCALE GENOMIC DNA]</scope>
    <source>
        <strain>ATCC 204508 / S288c</strain>
    </source>
</reference>
<reference key="2">
    <citation type="journal article" date="2014" name="G3 (Bethesda)">
        <title>The reference genome sequence of Saccharomyces cerevisiae: Then and now.</title>
        <authorList>
            <person name="Engel S.R."/>
            <person name="Dietrich F.S."/>
            <person name="Fisk D.G."/>
            <person name="Binkley G."/>
            <person name="Balakrishnan R."/>
            <person name="Costanzo M.C."/>
            <person name="Dwight S.S."/>
            <person name="Hitz B.C."/>
            <person name="Karra K."/>
            <person name="Nash R.S."/>
            <person name="Weng S."/>
            <person name="Wong E.D."/>
            <person name="Lloyd P."/>
            <person name="Skrzypek M.S."/>
            <person name="Miyasato S.R."/>
            <person name="Simison M."/>
            <person name="Cherry J.M."/>
        </authorList>
    </citation>
    <scope>GENOME REANNOTATION</scope>
    <source>
        <strain>ATCC 204508 / S288c</strain>
    </source>
</reference>
<proteinExistence type="uncertain"/>
<gene>
    <name type="ordered locus">YDR521W</name>
</gene>
<protein>
    <recommendedName>
        <fullName>Putative uncharacterized protein YDR521W</fullName>
    </recommendedName>
</protein>
<sequence>MKGSKSHLVFTLLQVSQLNVFLFFLGFLLPLFLGLFVSLRSLALALSSGWFIMDLILFRTFPEAELYPAVIGKPSGLGLTEAFEFISIFFPDVQQTERNIKYNWERCFNGE</sequence>
<accession>P87273</accession>
<keyword id="KW-0472">Membrane</keyword>
<keyword id="KW-0812">Transmembrane</keyword>
<keyword id="KW-1133">Transmembrane helix</keyword>
<evidence type="ECO:0000255" key="1"/>
<evidence type="ECO:0000305" key="2"/>
<evidence type="ECO:0000305" key="3">
    <source>
    </source>
</evidence>
<organism>
    <name type="scientific">Saccharomyces cerevisiae (strain ATCC 204508 / S288c)</name>
    <name type="common">Baker's yeast</name>
    <dbReference type="NCBI Taxonomy" id="559292"/>
    <lineage>
        <taxon>Eukaryota</taxon>
        <taxon>Fungi</taxon>
        <taxon>Dikarya</taxon>
        <taxon>Ascomycota</taxon>
        <taxon>Saccharomycotina</taxon>
        <taxon>Saccharomycetes</taxon>
        <taxon>Saccharomycetales</taxon>
        <taxon>Saccharomycetaceae</taxon>
        <taxon>Saccharomyces</taxon>
    </lineage>
</organism>